<keyword id="KW-0963">Cytoplasm</keyword>
<keyword id="KW-0206">Cytoskeleton</keyword>
<keyword id="KW-0217">Developmental protein</keyword>
<keyword id="KW-0221">Differentiation</keyword>
<keyword id="KW-0880">Kelch repeat</keyword>
<keyword id="KW-0597">Phosphoprotein</keyword>
<keyword id="KW-1185">Reference proteome</keyword>
<keyword id="KW-0677">Repeat</keyword>
<keyword id="KW-0744">Spermatogenesis</keyword>
<organism>
    <name type="scientific">Rattus norvegicus</name>
    <name type="common">Rat</name>
    <dbReference type="NCBI Taxonomy" id="10116"/>
    <lineage>
        <taxon>Eukaryota</taxon>
        <taxon>Metazoa</taxon>
        <taxon>Chordata</taxon>
        <taxon>Craniata</taxon>
        <taxon>Vertebrata</taxon>
        <taxon>Euteleostomi</taxon>
        <taxon>Mammalia</taxon>
        <taxon>Eutheria</taxon>
        <taxon>Euarchontoglires</taxon>
        <taxon>Glires</taxon>
        <taxon>Rodentia</taxon>
        <taxon>Myomorpha</taxon>
        <taxon>Muroidea</taxon>
        <taxon>Muridae</taxon>
        <taxon>Murinae</taxon>
        <taxon>Rattus</taxon>
    </lineage>
</organism>
<sequence length="588" mass="66765">MKLEFTEKNYNSFVLQNLNKQRKRKEYWDMALTVDHHVFFAHRNVLAAVSPLVKSLVSSNDMKTTDELYITIDPNYLSPATVDQLLDYFYSGKVVISEQNVEELLRGAQYFNTPRLRIHCNDFLIKSIRRVNCLRYLFLAELFELKEVSDLAYSGIRDNFHFWASPEGSMHFMRCPPVIFGRLLRDENLHVLNEDQALSALINWVYFRKEEREKYFKKFFNYINLNAVSNKTLMFASNKLTGLENNSAHATLIESVLMDRKQERPCSLLSYQRKGALLDSVVILGGQKAHGKFNDGVFAYIIQENLWLKLSEMPYRAAALSATAAGRYIYISGGTTEQISGLKTAWRYDMDDNSWTKLPDLPIGLVFHTMVTCGGTVYSVGGSIAPRRYVSNIYRYDERKEAWCLAGKMSIPMDGTAVITKGDRNLYIVTGRCLVKGYISRVGVVDCFDTCTGEVVQCITFPIEFNHRPLLSFHQDNILRVHSHRQSVEINLQKIKANKSTTSVPLLPNSCPLDVSHAICSIGDSKVFVCGGVTTASDVQTKDYTINPNAYLLDQKIGEWKTLACPPEALDCPACCLAKLPCKILQRI</sequence>
<feature type="chain" id="PRO_0000284433" description="Calicin">
    <location>
        <begin position="1"/>
        <end position="588"/>
    </location>
</feature>
<feature type="domain" description="BTB" evidence="3">
    <location>
        <begin position="28"/>
        <end position="98"/>
    </location>
</feature>
<feature type="domain" description="BACK">
    <location>
        <begin position="133"/>
        <end position="235"/>
    </location>
</feature>
<feature type="repeat" description="Kelch 1">
    <location>
        <begin position="280"/>
        <end position="327"/>
    </location>
</feature>
<feature type="repeat" description="Kelch 2">
    <location>
        <begin position="328"/>
        <end position="375"/>
    </location>
</feature>
<feature type="repeat" description="Kelch 3">
    <location>
        <begin position="377"/>
        <end position="423"/>
    </location>
</feature>
<feature type="repeat" description="Kelch 4">
    <location>
        <begin position="425"/>
        <end position="475"/>
    </location>
</feature>
<feature type="repeat" description="Kelch 5">
    <location>
        <begin position="476"/>
        <end position="525"/>
    </location>
</feature>
<feature type="repeat" description="Kelch 6">
    <location>
        <begin position="526"/>
        <end position="580"/>
    </location>
</feature>
<feature type="modified residue" description="Phosphoserine" evidence="4">
    <location>
        <position position="149"/>
    </location>
</feature>
<gene>
    <name type="primary">Ccin</name>
</gene>
<reference key="1">
    <citation type="journal article" date="2004" name="Genome Res.">
        <title>The status, quality, and expansion of the NIH full-length cDNA project: the Mammalian Gene Collection (MGC).</title>
        <authorList>
            <consortium name="The MGC Project Team"/>
        </authorList>
    </citation>
    <scope>NUCLEOTIDE SEQUENCE [LARGE SCALE MRNA]</scope>
    <source>
        <tissue>Testis</tissue>
    </source>
</reference>
<reference key="2">
    <citation type="journal article" date="2006" name="Proc. Natl. Acad. Sci. U.S.A.">
        <title>Quantitative phosphoproteomics of vasopressin-sensitive renal cells: regulation of aquaporin-2 phosphorylation at two sites.</title>
        <authorList>
            <person name="Hoffert J.D."/>
            <person name="Pisitkun T."/>
            <person name="Wang G."/>
            <person name="Shen R.-F."/>
            <person name="Knepper M.A."/>
        </authorList>
    </citation>
    <scope>PHOSPHORYLATION [LARGE SCALE ANALYSIS] AT SER-149</scope>
    <scope>IDENTIFICATION BY MASS SPECTROMETRY [LARGE SCALE ANALYSIS]</scope>
</reference>
<proteinExistence type="evidence at protein level"/>
<name>CALI_RAT</name>
<comment type="function">
    <text evidence="2">Required for both nuclear and acrosomal shaping during spermiogenesis.</text>
</comment>
<comment type="subunit">
    <text evidence="1">Interacts with CYLC1; the interaction may be relevant for proper acrosome attachment to the nuclear envelope.</text>
</comment>
<comment type="subcellular location">
    <subcellularLocation>
        <location evidence="2">Cytoplasm</location>
        <location evidence="2">Cytoskeleton</location>
        <location evidence="2">Perinuclear theca</location>
        <location evidence="2">Calyx</location>
    </subcellularLocation>
</comment>
<evidence type="ECO:0000250" key="1">
    <source>
        <dbReference type="UniProtKB" id="Q13939"/>
    </source>
</evidence>
<evidence type="ECO:0000250" key="2">
    <source>
        <dbReference type="UniProtKB" id="Q8CDE2"/>
    </source>
</evidence>
<evidence type="ECO:0000255" key="3">
    <source>
        <dbReference type="PROSITE-ProRule" id="PRU00037"/>
    </source>
</evidence>
<evidence type="ECO:0007744" key="4">
    <source>
    </source>
</evidence>
<protein>
    <recommendedName>
        <fullName>Calicin</fullName>
    </recommendedName>
</protein>
<accession>Q5XI58</accession>
<dbReference type="EMBL" id="BC083832">
    <property type="protein sequence ID" value="AAH83832.1"/>
    <property type="molecule type" value="mRNA"/>
</dbReference>
<dbReference type="RefSeq" id="NP_001005904.1">
    <property type="nucleotide sequence ID" value="NM_001005904.1"/>
</dbReference>
<dbReference type="SMR" id="Q5XI58"/>
<dbReference type="FunCoup" id="Q5XI58">
    <property type="interactions" value="3"/>
</dbReference>
<dbReference type="STRING" id="10116.ENSRNOP00000019887"/>
<dbReference type="iPTMnet" id="Q5XI58"/>
<dbReference type="PhosphoSitePlus" id="Q5XI58"/>
<dbReference type="PaxDb" id="10116-ENSRNOP00000019887"/>
<dbReference type="Ensembl" id="ENSRNOT00000019887.6">
    <property type="protein sequence ID" value="ENSRNOP00000019887.3"/>
    <property type="gene ID" value="ENSRNOG00000014831.6"/>
</dbReference>
<dbReference type="GeneID" id="298392"/>
<dbReference type="KEGG" id="rno:298392"/>
<dbReference type="UCSC" id="RGD:1359369">
    <property type="organism name" value="rat"/>
</dbReference>
<dbReference type="AGR" id="RGD:1359369"/>
<dbReference type="CTD" id="881"/>
<dbReference type="RGD" id="1359369">
    <property type="gene designation" value="Ccin"/>
</dbReference>
<dbReference type="eggNOG" id="KOG4441">
    <property type="taxonomic scope" value="Eukaryota"/>
</dbReference>
<dbReference type="GeneTree" id="ENSGT00940000162268"/>
<dbReference type="HOGENOM" id="CLU_466589_0_0_1"/>
<dbReference type="InParanoid" id="Q5XI58"/>
<dbReference type="OMA" id="MPYKAAA"/>
<dbReference type="OrthoDB" id="9978265at2759"/>
<dbReference type="PhylomeDB" id="Q5XI58"/>
<dbReference type="TreeFam" id="TF331981"/>
<dbReference type="PRO" id="PR:Q5XI58"/>
<dbReference type="Proteomes" id="UP000002494">
    <property type="component" value="Chromosome 5"/>
</dbReference>
<dbReference type="Bgee" id="ENSRNOG00000014831">
    <property type="expression patterns" value="Expressed in testis"/>
</dbReference>
<dbReference type="GO" id="GO:0031463">
    <property type="term" value="C:Cul3-RING ubiquitin ligase complex"/>
    <property type="evidence" value="ECO:0000318"/>
    <property type="project" value="GO_Central"/>
</dbReference>
<dbReference type="GO" id="GO:0005737">
    <property type="term" value="C:cytoplasm"/>
    <property type="evidence" value="ECO:0000318"/>
    <property type="project" value="GO_Central"/>
</dbReference>
<dbReference type="GO" id="GO:0033150">
    <property type="term" value="C:cytoskeletal calyx"/>
    <property type="evidence" value="ECO:0000250"/>
    <property type="project" value="UniProtKB"/>
</dbReference>
<dbReference type="GO" id="GO:1990756">
    <property type="term" value="F:ubiquitin-like ligase-substrate adaptor activity"/>
    <property type="evidence" value="ECO:0000318"/>
    <property type="project" value="GO_Central"/>
</dbReference>
<dbReference type="GO" id="GO:0030154">
    <property type="term" value="P:cell differentiation"/>
    <property type="evidence" value="ECO:0007669"/>
    <property type="project" value="UniProtKB-KW"/>
</dbReference>
<dbReference type="GO" id="GO:0043161">
    <property type="term" value="P:proteasome-mediated ubiquitin-dependent protein catabolic process"/>
    <property type="evidence" value="ECO:0000318"/>
    <property type="project" value="GO_Central"/>
</dbReference>
<dbReference type="GO" id="GO:0007283">
    <property type="term" value="P:spermatogenesis"/>
    <property type="evidence" value="ECO:0000250"/>
    <property type="project" value="UniProtKB"/>
</dbReference>
<dbReference type="CDD" id="cd18307">
    <property type="entry name" value="BTB_POZ_calicin"/>
    <property type="match status" value="1"/>
</dbReference>
<dbReference type="FunFam" id="1.25.40.420:FF:000022">
    <property type="entry name" value="Calicin"/>
    <property type="match status" value="1"/>
</dbReference>
<dbReference type="FunFam" id="2.120.10.80:FF:000126">
    <property type="entry name" value="Calicin"/>
    <property type="match status" value="1"/>
</dbReference>
<dbReference type="FunFam" id="3.30.710.10:FF:000125">
    <property type="entry name" value="Calicin"/>
    <property type="match status" value="1"/>
</dbReference>
<dbReference type="Gene3D" id="1.25.40.420">
    <property type="match status" value="1"/>
</dbReference>
<dbReference type="Gene3D" id="2.120.10.80">
    <property type="entry name" value="Kelch-type beta propeller"/>
    <property type="match status" value="1"/>
</dbReference>
<dbReference type="Gene3D" id="3.30.710.10">
    <property type="entry name" value="Potassium Channel Kv1.1, Chain A"/>
    <property type="match status" value="1"/>
</dbReference>
<dbReference type="InterPro" id="IPR011705">
    <property type="entry name" value="BACK"/>
</dbReference>
<dbReference type="InterPro" id="IPR000210">
    <property type="entry name" value="BTB/POZ_dom"/>
</dbReference>
<dbReference type="InterPro" id="IPR048070">
    <property type="entry name" value="Calicin_BTB_POZ"/>
</dbReference>
<dbReference type="InterPro" id="IPR015915">
    <property type="entry name" value="Kelch-typ_b-propeller"/>
</dbReference>
<dbReference type="InterPro" id="IPR006652">
    <property type="entry name" value="Kelch_1"/>
</dbReference>
<dbReference type="InterPro" id="IPR011333">
    <property type="entry name" value="SKP1/BTB/POZ_sf"/>
</dbReference>
<dbReference type="PANTHER" id="PTHR45632">
    <property type="entry name" value="LD33804P"/>
    <property type="match status" value="1"/>
</dbReference>
<dbReference type="Pfam" id="PF07707">
    <property type="entry name" value="BACK"/>
    <property type="match status" value="1"/>
</dbReference>
<dbReference type="Pfam" id="PF00651">
    <property type="entry name" value="BTB"/>
    <property type="match status" value="1"/>
</dbReference>
<dbReference type="Pfam" id="PF01344">
    <property type="entry name" value="Kelch_1"/>
    <property type="match status" value="1"/>
</dbReference>
<dbReference type="Pfam" id="PF13964">
    <property type="entry name" value="Kelch_6"/>
    <property type="match status" value="1"/>
</dbReference>
<dbReference type="SMART" id="SM00875">
    <property type="entry name" value="BACK"/>
    <property type="match status" value="1"/>
</dbReference>
<dbReference type="SMART" id="SM00225">
    <property type="entry name" value="BTB"/>
    <property type="match status" value="1"/>
</dbReference>
<dbReference type="SMART" id="SM00612">
    <property type="entry name" value="Kelch"/>
    <property type="match status" value="3"/>
</dbReference>
<dbReference type="SUPFAM" id="SSF117281">
    <property type="entry name" value="Kelch motif"/>
    <property type="match status" value="1"/>
</dbReference>
<dbReference type="SUPFAM" id="SSF54695">
    <property type="entry name" value="POZ domain"/>
    <property type="match status" value="1"/>
</dbReference>
<dbReference type="PROSITE" id="PS50097">
    <property type="entry name" value="BTB"/>
    <property type="match status" value="1"/>
</dbReference>